<evidence type="ECO:0000255" key="1">
    <source>
        <dbReference type="HAMAP-Rule" id="MF_00451"/>
    </source>
</evidence>
<evidence type="ECO:0000305" key="2"/>
<comment type="function">
    <text evidence="1">Major role in the synthesis of nucleoside triphosphates other than ATP. The ATP gamma phosphate is transferred to the NDP beta phosphate via a ping-pong mechanism, using a phosphorylated active-site intermediate.</text>
</comment>
<comment type="catalytic activity">
    <reaction evidence="1">
        <text>a 2'-deoxyribonucleoside 5'-diphosphate + ATP = a 2'-deoxyribonucleoside 5'-triphosphate + ADP</text>
        <dbReference type="Rhea" id="RHEA:44640"/>
        <dbReference type="ChEBI" id="CHEBI:30616"/>
        <dbReference type="ChEBI" id="CHEBI:61560"/>
        <dbReference type="ChEBI" id="CHEBI:73316"/>
        <dbReference type="ChEBI" id="CHEBI:456216"/>
        <dbReference type="EC" id="2.7.4.6"/>
    </reaction>
</comment>
<comment type="catalytic activity">
    <reaction evidence="1">
        <text>a ribonucleoside 5'-diphosphate + ATP = a ribonucleoside 5'-triphosphate + ADP</text>
        <dbReference type="Rhea" id="RHEA:18113"/>
        <dbReference type="ChEBI" id="CHEBI:30616"/>
        <dbReference type="ChEBI" id="CHEBI:57930"/>
        <dbReference type="ChEBI" id="CHEBI:61557"/>
        <dbReference type="ChEBI" id="CHEBI:456216"/>
        <dbReference type="EC" id="2.7.4.6"/>
    </reaction>
</comment>
<comment type="cofactor">
    <cofactor evidence="1">
        <name>Mg(2+)</name>
        <dbReference type="ChEBI" id="CHEBI:18420"/>
    </cofactor>
</comment>
<comment type="subunit">
    <text evidence="1">Homotetramer.</text>
</comment>
<comment type="subcellular location">
    <subcellularLocation>
        <location evidence="1">Cytoplasm</location>
    </subcellularLocation>
</comment>
<comment type="similarity">
    <text evidence="1 2">Belongs to the NDK family.</text>
</comment>
<reference key="1">
    <citation type="journal article" date="2001" name="Science">
        <title>Complete genome sequence of a virulent isolate of Streptococcus pneumoniae.</title>
        <authorList>
            <person name="Tettelin H."/>
            <person name="Nelson K.E."/>
            <person name="Paulsen I.T."/>
            <person name="Eisen J.A."/>
            <person name="Read T.D."/>
            <person name="Peterson S.N."/>
            <person name="Heidelberg J.F."/>
            <person name="DeBoy R.T."/>
            <person name="Haft D.H."/>
            <person name="Dodson R.J."/>
            <person name="Durkin A.S."/>
            <person name="Gwinn M.L."/>
            <person name="Kolonay J.F."/>
            <person name="Nelson W.C."/>
            <person name="Peterson J.D."/>
            <person name="Umayam L.A."/>
            <person name="White O."/>
            <person name="Salzberg S.L."/>
            <person name="Lewis M.R."/>
            <person name="Radune D."/>
            <person name="Holtzapple E.K."/>
            <person name="Khouri H.M."/>
            <person name="Wolf A.M."/>
            <person name="Utterback T.R."/>
            <person name="Hansen C.L."/>
            <person name="McDonald L.A."/>
            <person name="Feldblyum T.V."/>
            <person name="Angiuoli S.V."/>
            <person name="Dickinson T."/>
            <person name="Hickey E.K."/>
            <person name="Holt I.E."/>
            <person name="Loftus B.J."/>
            <person name="Yang F."/>
            <person name="Smith H.O."/>
            <person name="Venter J.C."/>
            <person name="Dougherty B.A."/>
            <person name="Morrison D.A."/>
            <person name="Hollingshead S.K."/>
            <person name="Fraser C.M."/>
        </authorList>
    </citation>
    <scope>NUCLEOTIDE SEQUENCE [LARGE SCALE GENOMIC DNA]</scope>
    <source>
        <strain>ATCC BAA-334 / TIGR4</strain>
    </source>
</reference>
<proteinExistence type="inferred from homology"/>
<dbReference type="EC" id="2.7.4.6" evidence="1"/>
<dbReference type="EMBL" id="AE005672">
    <property type="protein sequence ID" value="AAK76026.1"/>
    <property type="molecule type" value="Genomic_DNA"/>
</dbReference>
<dbReference type="PIR" id="A95229">
    <property type="entry name" value="A95229"/>
</dbReference>
<dbReference type="RefSeq" id="WP_000438289.1">
    <property type="nucleotide sequence ID" value="NZ_CP155539.1"/>
</dbReference>
<dbReference type="SMR" id="P65536"/>
<dbReference type="IntAct" id="P65536">
    <property type="interactions" value="1"/>
</dbReference>
<dbReference type="PaxDb" id="170187-SP_1959"/>
<dbReference type="EnsemblBacteria" id="AAK76026">
    <property type="protein sequence ID" value="AAK76026"/>
    <property type="gene ID" value="SP_1959"/>
</dbReference>
<dbReference type="KEGG" id="spn:SP_1959"/>
<dbReference type="eggNOG" id="COG0105">
    <property type="taxonomic scope" value="Bacteria"/>
</dbReference>
<dbReference type="PhylomeDB" id="P65536"/>
<dbReference type="BioCyc" id="SPNE170187:G1FZB-2013-MONOMER"/>
<dbReference type="Proteomes" id="UP000000585">
    <property type="component" value="Chromosome"/>
</dbReference>
<dbReference type="GO" id="GO:0005737">
    <property type="term" value="C:cytoplasm"/>
    <property type="evidence" value="ECO:0007669"/>
    <property type="project" value="UniProtKB-SubCell"/>
</dbReference>
<dbReference type="GO" id="GO:0005524">
    <property type="term" value="F:ATP binding"/>
    <property type="evidence" value="ECO:0007669"/>
    <property type="project" value="UniProtKB-UniRule"/>
</dbReference>
<dbReference type="GO" id="GO:0046872">
    <property type="term" value="F:metal ion binding"/>
    <property type="evidence" value="ECO:0007669"/>
    <property type="project" value="UniProtKB-KW"/>
</dbReference>
<dbReference type="GO" id="GO:0004550">
    <property type="term" value="F:nucleoside diphosphate kinase activity"/>
    <property type="evidence" value="ECO:0007669"/>
    <property type="project" value="UniProtKB-UniRule"/>
</dbReference>
<dbReference type="GO" id="GO:0006241">
    <property type="term" value="P:CTP biosynthetic process"/>
    <property type="evidence" value="ECO:0007669"/>
    <property type="project" value="UniProtKB-UniRule"/>
</dbReference>
<dbReference type="GO" id="GO:0006183">
    <property type="term" value="P:GTP biosynthetic process"/>
    <property type="evidence" value="ECO:0007669"/>
    <property type="project" value="UniProtKB-UniRule"/>
</dbReference>
<dbReference type="GO" id="GO:0006228">
    <property type="term" value="P:UTP biosynthetic process"/>
    <property type="evidence" value="ECO:0007669"/>
    <property type="project" value="UniProtKB-UniRule"/>
</dbReference>
<dbReference type="CDD" id="cd04413">
    <property type="entry name" value="NDPk_I"/>
    <property type="match status" value="1"/>
</dbReference>
<dbReference type="FunFam" id="3.30.70.141:FF:000013">
    <property type="entry name" value="Nucleoside diphosphate kinase"/>
    <property type="match status" value="1"/>
</dbReference>
<dbReference type="Gene3D" id="3.30.70.141">
    <property type="entry name" value="Nucleoside diphosphate kinase-like domain"/>
    <property type="match status" value="1"/>
</dbReference>
<dbReference type="HAMAP" id="MF_00451">
    <property type="entry name" value="NDP_kinase"/>
    <property type="match status" value="1"/>
</dbReference>
<dbReference type="InterPro" id="IPR034907">
    <property type="entry name" value="NDK-like_dom"/>
</dbReference>
<dbReference type="InterPro" id="IPR036850">
    <property type="entry name" value="NDK-like_dom_sf"/>
</dbReference>
<dbReference type="InterPro" id="IPR001564">
    <property type="entry name" value="Nucleoside_diP_kinase"/>
</dbReference>
<dbReference type="InterPro" id="IPR023005">
    <property type="entry name" value="Nucleoside_diP_kinase_AS"/>
</dbReference>
<dbReference type="NCBIfam" id="NF001908">
    <property type="entry name" value="PRK00668.1"/>
    <property type="match status" value="1"/>
</dbReference>
<dbReference type="PANTHER" id="PTHR11349">
    <property type="entry name" value="NUCLEOSIDE DIPHOSPHATE KINASE"/>
    <property type="match status" value="1"/>
</dbReference>
<dbReference type="Pfam" id="PF00334">
    <property type="entry name" value="NDK"/>
    <property type="match status" value="1"/>
</dbReference>
<dbReference type="PRINTS" id="PR01243">
    <property type="entry name" value="NUCDPKINASE"/>
</dbReference>
<dbReference type="SMART" id="SM00562">
    <property type="entry name" value="NDK"/>
    <property type="match status" value="1"/>
</dbReference>
<dbReference type="SUPFAM" id="SSF54919">
    <property type="entry name" value="Nucleoside diphosphate kinase, NDK"/>
    <property type="match status" value="1"/>
</dbReference>
<dbReference type="PROSITE" id="PS00469">
    <property type="entry name" value="NDPK"/>
    <property type="match status" value="1"/>
</dbReference>
<dbReference type="PROSITE" id="PS51374">
    <property type="entry name" value="NDPK_LIKE"/>
    <property type="match status" value="1"/>
</dbReference>
<name>NDK_STRPN</name>
<accession>P65536</accession>
<accession>Q97NQ9</accession>
<protein>
    <recommendedName>
        <fullName evidence="1">Nucleoside diphosphate kinase</fullName>
        <shortName evidence="1">NDK</shortName>
        <shortName evidence="1">NDP kinase</shortName>
        <ecNumber evidence="1">2.7.4.6</ecNumber>
    </recommendedName>
    <alternativeName>
        <fullName evidence="1">Nucleoside-2-P kinase</fullName>
    </alternativeName>
</protein>
<keyword id="KW-0067">ATP-binding</keyword>
<keyword id="KW-0963">Cytoplasm</keyword>
<keyword id="KW-0418">Kinase</keyword>
<keyword id="KW-0460">Magnesium</keyword>
<keyword id="KW-0479">Metal-binding</keyword>
<keyword id="KW-0546">Nucleotide metabolism</keyword>
<keyword id="KW-0547">Nucleotide-binding</keyword>
<keyword id="KW-0597">Phosphoprotein</keyword>
<keyword id="KW-1185">Reference proteome</keyword>
<keyword id="KW-0808">Transferase</keyword>
<feature type="chain" id="PRO_0000137056" description="Nucleoside diphosphate kinase">
    <location>
        <begin position="1"/>
        <end position="137"/>
    </location>
</feature>
<feature type="active site" description="Pros-phosphohistidine intermediate" evidence="1">
    <location>
        <position position="121"/>
    </location>
</feature>
<feature type="binding site" evidence="1">
    <location>
        <position position="9"/>
    </location>
    <ligand>
        <name>ATP</name>
        <dbReference type="ChEBI" id="CHEBI:30616"/>
    </ligand>
</feature>
<feature type="binding site" evidence="1">
    <location>
        <position position="58"/>
    </location>
    <ligand>
        <name>ATP</name>
        <dbReference type="ChEBI" id="CHEBI:30616"/>
    </ligand>
</feature>
<feature type="binding site" evidence="1">
    <location>
        <position position="86"/>
    </location>
    <ligand>
        <name>ATP</name>
        <dbReference type="ChEBI" id="CHEBI:30616"/>
    </ligand>
</feature>
<feature type="binding site" evidence="1">
    <location>
        <position position="92"/>
    </location>
    <ligand>
        <name>ATP</name>
        <dbReference type="ChEBI" id="CHEBI:30616"/>
    </ligand>
</feature>
<feature type="binding site" evidence="1">
    <location>
        <position position="103"/>
    </location>
    <ligand>
        <name>ATP</name>
        <dbReference type="ChEBI" id="CHEBI:30616"/>
    </ligand>
</feature>
<feature type="binding site" evidence="1">
    <location>
        <position position="113"/>
    </location>
    <ligand>
        <name>ATP</name>
        <dbReference type="ChEBI" id="CHEBI:30616"/>
    </ligand>
</feature>
<gene>
    <name evidence="1" type="primary">ndk</name>
    <name type="ordered locus">SP_1959</name>
</gene>
<sequence length="137" mass="15440">MEQTFFIIKPDGVKRGLVGEVLKRIEQRGFTIEKLEFRSQVSEELIDQHYQDLVGQSFYPPIREFMTSGPVLVGVISGPKVIETWRTMMGATRPEEALPGTIRGDFAKAAGENEIIQNVVHGSDSEESAKREIALWF</sequence>
<organism>
    <name type="scientific">Streptococcus pneumoniae serotype 4 (strain ATCC BAA-334 / TIGR4)</name>
    <dbReference type="NCBI Taxonomy" id="170187"/>
    <lineage>
        <taxon>Bacteria</taxon>
        <taxon>Bacillati</taxon>
        <taxon>Bacillota</taxon>
        <taxon>Bacilli</taxon>
        <taxon>Lactobacillales</taxon>
        <taxon>Streptococcaceae</taxon>
        <taxon>Streptococcus</taxon>
    </lineage>
</organism>